<proteinExistence type="inferred from homology"/>
<organismHost>
    <name type="scientific">Homo sapiens</name>
    <name type="common">Human</name>
    <dbReference type="NCBI Taxonomy" id="9606"/>
</organismHost>
<organismHost>
    <name type="scientific">Sus scrofa</name>
    <name type="common">Pig</name>
    <dbReference type="NCBI Taxonomy" id="9823"/>
</organismHost>
<feature type="chain" id="PRO_0000408877" description="Polyprotein p42">
    <location>
        <begin position="1"/>
        <end position="374"/>
    </location>
</feature>
<feature type="chain" id="PRO_0000269458" description="Protein M1'">
    <location>
        <begin position="1"/>
        <end position="259"/>
    </location>
</feature>
<feature type="chain" id="PRO_0000269905" description="Protein CM2">
    <location>
        <begin position="260"/>
        <end position="374"/>
    </location>
</feature>
<feature type="topological domain" description="Cytoplasmic" evidence="2">
    <location>
        <begin position="1"/>
        <end position="242"/>
    </location>
</feature>
<feature type="transmembrane region" description="Helical; Signal-anchor for type II membrane protein" evidence="2">
    <location>
        <begin position="243"/>
        <end position="262"/>
    </location>
</feature>
<feature type="topological domain" description="Extracellular" evidence="2">
    <location>
        <begin position="263"/>
        <end position="288"/>
    </location>
</feature>
<feature type="transmembrane region" description="Helical" evidence="2">
    <location>
        <begin position="289"/>
        <end position="309"/>
    </location>
</feature>
<feature type="topological domain" description="Cytoplasmic" evidence="2">
    <location>
        <begin position="310"/>
        <end position="374"/>
    </location>
</feature>
<feature type="site" description="Cleavage; by host signal peptidase">
    <location>
        <begin position="259"/>
        <end position="260"/>
    </location>
</feature>
<feature type="modified residue" description="Phosphoserine; by host" evidence="1">
    <location>
        <position position="337"/>
    </location>
</feature>
<feature type="modified residue" description="Phosphoserine; by host" evidence="1">
    <location>
        <position position="362"/>
    </location>
</feature>
<feature type="lipid moiety-binding region" description="S-palmitoyl cysteine; by host" evidence="1">
    <location>
        <position position="324"/>
    </location>
</feature>
<feature type="glycosylation site" description="N-linked (GlcNAc...) asparagine; by host" evidence="2">
    <location>
        <position position="270"/>
    </location>
</feature>
<feature type="splice variant" id="VSP_022113" description="In isoform M1." evidence="3">
    <location>
        <begin position="243"/>
        <end position="374"/>
    </location>
</feature>
<dbReference type="EMBL" id="AB000610">
    <property type="protein sequence ID" value="BAA75842.1"/>
    <property type="molecule type" value="Genomic_RNA"/>
</dbReference>
<dbReference type="EMBL" id="AB000610">
    <property type="protein sequence ID" value="BAA75843.1"/>
    <property type="molecule type" value="Genomic_RNA"/>
</dbReference>
<dbReference type="SMR" id="Q788J2"/>
<dbReference type="GlyCosmos" id="Q788J2">
    <property type="glycosylation" value="1 site, No reported glycans"/>
</dbReference>
<dbReference type="GO" id="GO:0044167">
    <property type="term" value="C:host cell endoplasmic reticulum membrane"/>
    <property type="evidence" value="ECO:0007669"/>
    <property type="project" value="UniProtKB-SubCell"/>
</dbReference>
<dbReference type="GO" id="GO:0020002">
    <property type="term" value="C:host cell plasma membrane"/>
    <property type="evidence" value="ECO:0007669"/>
    <property type="project" value="UniProtKB-SubCell"/>
</dbReference>
<dbReference type="GO" id="GO:0016020">
    <property type="term" value="C:membrane"/>
    <property type="evidence" value="ECO:0007669"/>
    <property type="project" value="UniProtKB-KW"/>
</dbReference>
<dbReference type="GO" id="GO:0019028">
    <property type="term" value="C:viral capsid"/>
    <property type="evidence" value="ECO:0007669"/>
    <property type="project" value="InterPro"/>
</dbReference>
<dbReference type="GO" id="GO:0055036">
    <property type="term" value="C:virion membrane"/>
    <property type="evidence" value="ECO:0007669"/>
    <property type="project" value="UniProtKB-SubCell"/>
</dbReference>
<dbReference type="GO" id="GO:0015267">
    <property type="term" value="F:channel activity"/>
    <property type="evidence" value="ECO:0007669"/>
    <property type="project" value="UniProtKB-KW"/>
</dbReference>
<dbReference type="GO" id="GO:0039660">
    <property type="term" value="F:structural constituent of virion"/>
    <property type="evidence" value="ECO:0007669"/>
    <property type="project" value="UniProtKB-KW"/>
</dbReference>
<dbReference type="GO" id="GO:0034220">
    <property type="term" value="P:monoatomic ion transmembrane transport"/>
    <property type="evidence" value="ECO:0007669"/>
    <property type="project" value="UniProtKB-KW"/>
</dbReference>
<dbReference type="InterPro" id="IPR004271">
    <property type="entry name" value="CM1"/>
</dbReference>
<dbReference type="InterPro" id="IPR004267">
    <property type="entry name" value="CM2"/>
</dbReference>
<dbReference type="Pfam" id="PF03026">
    <property type="entry name" value="CM1"/>
    <property type="match status" value="1"/>
</dbReference>
<dbReference type="Pfam" id="PF03021">
    <property type="entry name" value="CM2"/>
    <property type="match status" value="1"/>
</dbReference>
<evidence type="ECO:0000250" key="1"/>
<evidence type="ECO:0000255" key="2"/>
<evidence type="ECO:0000305" key="3"/>
<sequence length="374" mass="41801">MAHEILIAETEAFLKNVAPETRTAIISAITGGKSACKSAAKLIKNEHLPLMSGEATTMHIVMRCLYPEIKPWKKASDMLNKATSSLKKSEGRDIRKQMKAAGDFLGVESMMKMRAFRDDQIMEMVEEVYDHPDDYTPDIRIGTITAWLRCKNKKSERYRSNVSESGRTALKIHEVRKASTAMNEIAGITGLGEEALSLQRQTESLAILCNHTFGSNIMRPHLEKAIKGVEGRVGEMGRMAMKWLVVIIYFSITSQPASACNLKTCLKLFNNTDAVTVHCFNENQGYMLTLASLGLGIITMLYLLVKIIIELVNGFVLGRWERWCGDIKTTIMPEIDSMEKDIALSRERLDLGEDAPDETDNSPIPFSNDGIFEI</sequence>
<protein>
    <recommendedName>
        <fullName>Polyprotein p42</fullName>
    </recommendedName>
    <component>
        <recommendedName>
            <fullName>Protein M1'</fullName>
        </recommendedName>
        <alternativeName>
            <fullName>CM1'</fullName>
        </alternativeName>
        <alternativeName>
            <fullName>p31</fullName>
        </alternativeName>
    </component>
    <component>
        <recommendedName>
            <fullName>Protein CM2</fullName>
        </recommendedName>
    </component>
</protein>
<accession>Q788J2</accession>
<accession>Q788J3</accession>
<name>MAT_INCHY</name>
<reference key="1">
    <citation type="journal article" date="1997" name="Virus Genes">
        <title>Evolutionary analysis of influenza C virus M genes.</title>
        <authorList>
            <person name="Tada Y."/>
            <person name="Hongo S."/>
            <person name="Muraki Y."/>
            <person name="Sugawara K."/>
            <person name="Kitame F."/>
            <person name="Nakamura K."/>
        </authorList>
    </citation>
    <scope>NUCLEOTIDE SEQUENCE [GENOMIC RNA]</scope>
</reference>
<comment type="function">
    <text evidence="1">Ion channel, which might have a role in genome packaging and uncoating processes.</text>
</comment>
<comment type="subunit">
    <text evidence="1">Homodimer; disulfide-linked. Homotetramer; disulfide-linked.</text>
</comment>
<comment type="subcellular location">
    <molecule>Polyprotein p42</molecule>
    <subcellularLocation>
        <location evidence="3">Host endoplasmic reticulum membrane</location>
        <topology evidence="3">Multi-pass membrane protein</topology>
    </subcellularLocation>
</comment>
<comment type="subcellular location">
    <molecule>Protein M1'</molecule>
    <subcellularLocation>
        <location evidence="3">Virion membrane</location>
        <topology evidence="3">Single-pass type II membrane protein</topology>
    </subcellularLocation>
</comment>
<comment type="subcellular location">
    <molecule>Protein CM2</molecule>
    <subcellularLocation>
        <location evidence="3">Virion membrane</location>
        <topology evidence="3">Single-pass type I membrane protein</topology>
    </subcellularLocation>
    <subcellularLocation>
        <location evidence="3">Host cell membrane</location>
        <topology evidence="3">Single-pass type I membrane protein</topology>
    </subcellularLocation>
</comment>
<comment type="alternative products">
    <event type="alternative splicing"/>
    <isoform>
        <id>Q788J2-1</id>
        <name>p42</name>
        <sequence type="displayed"/>
    </isoform>
    <isoform>
        <id>Q788J2-2</id>
        <name>M1</name>
        <name>CM1</name>
        <sequence type="described" ref="VSP_022113"/>
    </isoform>
</comment>
<comment type="PTM">
    <text evidence="1">Palmitoylated.</text>
</comment>
<comment type="PTM">
    <text evidence="1">N-glycosylated.</text>
</comment>
<comment type="PTM">
    <text evidence="1">Ser-337 is the major site of phosphorylation, Ser-362 being a minor one.</text>
</comment>
<comment type="miscellaneous">
    <molecule>Isoform p42</molecule>
    <text>Produced by unspliced mRNA.</text>
</comment>
<comment type="similarity">
    <text evidence="3">Belongs to the influenza C protein M1 family.</text>
</comment>
<keyword id="KW-0025">Alternative splicing</keyword>
<keyword id="KW-1015">Disulfide bond</keyword>
<keyword id="KW-0325">Glycoprotein</keyword>
<keyword id="KW-1032">Host cell membrane</keyword>
<keyword id="KW-1038">Host endoplasmic reticulum</keyword>
<keyword id="KW-1043">Host membrane</keyword>
<keyword id="KW-0407">Ion channel</keyword>
<keyword id="KW-0406">Ion transport</keyword>
<keyword id="KW-0449">Lipoprotein</keyword>
<keyword id="KW-0472">Membrane</keyword>
<keyword id="KW-0564">Palmitate</keyword>
<keyword id="KW-0597">Phosphoprotein</keyword>
<keyword id="KW-0735">Signal-anchor</keyword>
<keyword id="KW-0812">Transmembrane</keyword>
<keyword id="KW-1133">Transmembrane helix</keyword>
<keyword id="KW-0813">Transport</keyword>
<keyword id="KW-1182">Viral ion channel</keyword>
<keyword id="KW-0468">Viral matrix protein</keyword>
<keyword id="KW-0946">Virion</keyword>
<organism>
    <name type="scientific">Influenza C virus (strain C/Hyogo/1/1983)</name>
    <dbReference type="NCBI Taxonomy" id="203225"/>
    <lineage>
        <taxon>Viruses</taxon>
        <taxon>Riboviria</taxon>
        <taxon>Orthornavirae</taxon>
        <taxon>Negarnaviricota</taxon>
        <taxon>Polyploviricotina</taxon>
        <taxon>Insthoviricetes</taxon>
        <taxon>Articulavirales</taxon>
        <taxon>Orthomyxoviridae</taxon>
        <taxon>Gammainfluenzavirus</taxon>
        <taxon>Gammainfluenzavirus influenzae</taxon>
        <taxon>Influenza C virus</taxon>
    </lineage>
</organism>
<gene>
    <name type="primary">M</name>
</gene>